<keyword id="KW-0002">3D-structure</keyword>
<keyword id="KW-0868">Chloride</keyword>
<keyword id="KW-1185">Reference proteome</keyword>
<keyword id="KW-0949">S-adenosyl-L-methionine</keyword>
<keyword id="KW-0808">Transferase</keyword>
<feature type="chain" id="PRO_0000424267" description="Adenosyl-chloride synthase">
    <location>
        <begin position="1"/>
        <end position="283"/>
    </location>
</feature>
<feature type="binding site">
    <location>
        <position position="11"/>
    </location>
    <ligand>
        <name>substrate</name>
    </ligand>
</feature>
<feature type="binding site">
    <location>
        <begin position="70"/>
        <end position="72"/>
    </location>
    <ligand>
        <name>substrate</name>
    </ligand>
</feature>
<feature type="binding site">
    <location>
        <begin position="128"/>
        <end position="131"/>
    </location>
    <ligand>
        <name>substrate</name>
    </ligand>
</feature>
<feature type="binding site">
    <location>
        <position position="131"/>
    </location>
    <ligand>
        <name>chloride</name>
        <dbReference type="ChEBI" id="CHEBI:17996"/>
    </ligand>
</feature>
<feature type="mutagenesis site" description="Results in a 2-fold reduction of chlorinase activity." evidence="1">
    <original>Y</original>
    <variation>T</variation>
    <location>
        <position position="70"/>
    </location>
</feature>
<feature type="mutagenesis site" description="It has a reduced activity, however, to a much lesser extent than the Y70T mutant." evidence="1">
    <original>W</original>
    <variation>F</variation>
    <location>
        <position position="129"/>
    </location>
</feature>
<feature type="mutagenesis site" description="Loss of chlorinase activity." evidence="1">
    <original>G</original>
    <variation>S</variation>
    <location>
        <position position="131"/>
    </location>
</feature>
<feature type="strand" evidence="4">
    <location>
        <begin position="5"/>
        <end position="12"/>
    </location>
</feature>
<feature type="strand" evidence="4">
    <location>
        <begin position="14"/>
        <end position="17"/>
    </location>
</feature>
<feature type="helix" evidence="4">
    <location>
        <begin position="18"/>
        <end position="29"/>
    </location>
</feature>
<feature type="strand" evidence="4">
    <location>
        <begin position="34"/>
        <end position="40"/>
    </location>
</feature>
<feature type="helix" evidence="4">
    <location>
        <begin position="47"/>
        <end position="54"/>
    </location>
</feature>
<feature type="helix" evidence="4">
    <location>
        <begin position="57"/>
        <end position="60"/>
    </location>
</feature>
<feature type="strand" evidence="4">
    <location>
        <begin position="65"/>
        <end position="70"/>
    </location>
</feature>
<feature type="turn" evidence="4">
    <location>
        <begin position="73"/>
        <end position="76"/>
    </location>
</feature>
<feature type="strand" evidence="4">
    <location>
        <begin position="81"/>
        <end position="86"/>
    </location>
</feature>
<feature type="strand" evidence="4">
    <location>
        <begin position="91"/>
        <end position="98"/>
    </location>
</feature>
<feature type="helix" evidence="4">
    <location>
        <begin position="101"/>
        <end position="106"/>
    </location>
</feature>
<feature type="strand" evidence="4">
    <location>
        <begin position="109"/>
        <end position="114"/>
    </location>
</feature>
<feature type="helix" evidence="4">
    <location>
        <begin position="118"/>
        <end position="120"/>
    </location>
</feature>
<feature type="helix" evidence="4">
    <location>
        <begin position="130"/>
        <end position="133"/>
    </location>
</feature>
<feature type="helix" evidence="4">
    <location>
        <begin position="135"/>
        <end position="143"/>
    </location>
</feature>
<feature type="helix" evidence="4">
    <location>
        <begin position="148"/>
        <end position="151"/>
    </location>
</feature>
<feature type="helix" evidence="4">
    <location>
        <begin position="157"/>
        <end position="159"/>
    </location>
</feature>
<feature type="strand" evidence="4">
    <location>
        <begin position="169"/>
        <end position="171"/>
    </location>
</feature>
<feature type="strand" evidence="4">
    <location>
        <begin position="174"/>
        <end position="182"/>
    </location>
</feature>
<feature type="turn" evidence="4">
    <location>
        <begin position="184"/>
        <end position="186"/>
    </location>
</feature>
<feature type="strand" evidence="4">
    <location>
        <begin position="189"/>
        <end position="194"/>
    </location>
</feature>
<feature type="helix" evidence="4">
    <location>
        <begin position="195"/>
        <end position="199"/>
    </location>
</feature>
<feature type="strand" evidence="4">
    <location>
        <begin position="207"/>
        <end position="213"/>
    </location>
</feature>
<feature type="strand" evidence="4">
    <location>
        <begin position="219"/>
        <end position="227"/>
    </location>
</feature>
<feature type="helix" evidence="4">
    <location>
        <begin position="228"/>
        <end position="230"/>
    </location>
</feature>
<feature type="strand" evidence="4">
    <location>
        <begin position="236"/>
        <end position="240"/>
    </location>
</feature>
<feature type="strand" evidence="4">
    <location>
        <begin position="244"/>
        <end position="250"/>
    </location>
</feature>
<feature type="helix" evidence="4">
    <location>
        <begin position="255"/>
        <end position="258"/>
    </location>
</feature>
<feature type="strand" evidence="4">
    <location>
        <begin position="266"/>
        <end position="270"/>
    </location>
</feature>
<accession>A4X3Q0</accession>
<organism>
    <name type="scientific">Salinispora tropica (strain ATCC BAA-916 / DSM 44818 / JCM 13857 / NBRC 105044 / CNB-440)</name>
    <dbReference type="NCBI Taxonomy" id="369723"/>
    <lineage>
        <taxon>Bacteria</taxon>
        <taxon>Bacillati</taxon>
        <taxon>Actinomycetota</taxon>
        <taxon>Actinomycetes</taxon>
        <taxon>Micromonosporales</taxon>
        <taxon>Micromonosporaceae</taxon>
        <taxon>Salinispora</taxon>
    </lineage>
</organism>
<gene>
    <name evidence="2" type="primary">salL</name>
    <name type="ordered locus">Strop_1026</name>
</gene>
<dbReference type="EC" id="2.5.1.94" evidence="1"/>
<dbReference type="EMBL" id="CP000667">
    <property type="protein sequence ID" value="ABP53500.1"/>
    <property type="molecule type" value="Genomic_DNA"/>
</dbReference>
<dbReference type="RefSeq" id="WP_011904934.1">
    <property type="nucleotide sequence ID" value="NC_009380.1"/>
</dbReference>
<dbReference type="PDB" id="2Q6I">
    <property type="method" value="X-ray"/>
    <property type="resolution" value="2.60 A"/>
    <property type="chains" value="A=1-283"/>
</dbReference>
<dbReference type="PDB" id="2Q6K">
    <property type="method" value="X-ray"/>
    <property type="resolution" value="1.55 A"/>
    <property type="chains" value="A=1-283"/>
</dbReference>
<dbReference type="PDB" id="2Q6L">
    <property type="method" value="X-ray"/>
    <property type="resolution" value="2.72 A"/>
    <property type="chains" value="A=1-283"/>
</dbReference>
<dbReference type="PDB" id="2Q6O">
    <property type="method" value="X-ray"/>
    <property type="resolution" value="2.00 A"/>
    <property type="chains" value="A/B=1-283"/>
</dbReference>
<dbReference type="PDB" id="6RYZ">
    <property type="method" value="X-ray"/>
    <property type="resolution" value="1.50 A"/>
    <property type="chains" value="A/B/C=1-283"/>
</dbReference>
<dbReference type="PDB" id="6RZ2">
    <property type="method" value="X-ray"/>
    <property type="resolution" value="1.77 A"/>
    <property type="chains" value="A/B/C=1-283"/>
</dbReference>
<dbReference type="PDBsum" id="2Q6I"/>
<dbReference type="PDBsum" id="2Q6K"/>
<dbReference type="PDBsum" id="2Q6L"/>
<dbReference type="PDBsum" id="2Q6O"/>
<dbReference type="PDBsum" id="6RYZ"/>
<dbReference type="PDBsum" id="6RZ2"/>
<dbReference type="SMR" id="A4X3Q0"/>
<dbReference type="STRING" id="369723.Strop_1026"/>
<dbReference type="ChEMBL" id="CHEMBL4296303"/>
<dbReference type="KEGG" id="stp:Strop_1026"/>
<dbReference type="PATRIC" id="fig|369723.5.peg.1048"/>
<dbReference type="eggNOG" id="COG1912">
    <property type="taxonomic scope" value="Bacteria"/>
</dbReference>
<dbReference type="HOGENOM" id="CLU_059734_0_0_11"/>
<dbReference type="BRENDA" id="2.5.1.94">
    <property type="organism ID" value="12398"/>
</dbReference>
<dbReference type="SABIO-RK" id="A4X3Q0"/>
<dbReference type="EvolutionaryTrace" id="A4X3Q0"/>
<dbReference type="Proteomes" id="UP000000235">
    <property type="component" value="Chromosome"/>
</dbReference>
<dbReference type="GO" id="GO:0016765">
    <property type="term" value="F:transferase activity, transferring alkyl or aryl (other than methyl) groups"/>
    <property type="evidence" value="ECO:0000314"/>
    <property type="project" value="UniProtKB"/>
</dbReference>
<dbReference type="Gene3D" id="2.40.30.90">
    <property type="entry name" value="Bacterial fluorinating enzyme like"/>
    <property type="match status" value="1"/>
</dbReference>
<dbReference type="Gene3D" id="3.40.50.10790">
    <property type="entry name" value="S-adenosyl-l-methionine hydroxide adenosyltransferase, N-terminal"/>
    <property type="match status" value="1"/>
</dbReference>
<dbReference type="InterPro" id="IPR046470">
    <property type="entry name" value="SAM_HAT_C"/>
</dbReference>
<dbReference type="InterPro" id="IPR046469">
    <property type="entry name" value="SAM_HAT_N"/>
</dbReference>
<dbReference type="InterPro" id="IPR002747">
    <property type="entry name" value="SAM_OH_AdoTrfase"/>
</dbReference>
<dbReference type="InterPro" id="IPR023227">
    <property type="entry name" value="SAM_OH_AdoTrfase_C_sf"/>
</dbReference>
<dbReference type="InterPro" id="IPR023228">
    <property type="entry name" value="SAM_OH_AdoTrfase_N_sf"/>
</dbReference>
<dbReference type="PANTHER" id="PTHR35092">
    <property type="entry name" value="CHLORINASE MJ1651"/>
    <property type="match status" value="1"/>
</dbReference>
<dbReference type="PANTHER" id="PTHR35092:SF1">
    <property type="entry name" value="CHLORINASE MJ1651"/>
    <property type="match status" value="1"/>
</dbReference>
<dbReference type="Pfam" id="PF20257">
    <property type="entry name" value="SAM_HAT_C"/>
    <property type="match status" value="1"/>
</dbReference>
<dbReference type="Pfam" id="PF01887">
    <property type="entry name" value="SAM_HAT_N"/>
    <property type="match status" value="1"/>
</dbReference>
<dbReference type="PIRSF" id="PIRSF006779">
    <property type="entry name" value="UCP006779"/>
    <property type="match status" value="1"/>
</dbReference>
<dbReference type="SUPFAM" id="SSF101852">
    <property type="entry name" value="Bacterial fluorinating enzyme, C-terminal domain"/>
    <property type="match status" value="1"/>
</dbReference>
<dbReference type="SUPFAM" id="SSF102522">
    <property type="entry name" value="Bacterial fluorinating enzyme, N-terminal domain"/>
    <property type="match status" value="1"/>
</dbReference>
<protein>
    <recommendedName>
        <fullName>Adenosyl-chloride synthase</fullName>
        <ecNumber evidence="1">2.5.1.94</ecNumber>
    </recommendedName>
    <alternativeName>
        <fullName>5'-chloro-5'-deoxyadenosine synthase</fullName>
    </alternativeName>
    <alternativeName>
        <fullName evidence="2">Chlorinase SalL</fullName>
    </alternativeName>
</protein>
<sequence>MQHNLIAFLSDVGSADEAHALCKGVMYGVAPAATIVDITHDVAPFDVREGALFLADVPHSFPAHTVICAYVYPETGTATHTIAVRNEKGQLLVGPNNGLLSFALDASPAVECHEVLSPDVMNQPVTPTWYGKDIVAACAAHLAAGTDLAAVGPRIDPKQIVRLPYASASEVEGGIRGEVVRIDRAFGNVWTNIPTHLIGSMLQDGERLEVKIEALSDTVLELPFCKTFGEVDEGQPLLYLNSRGRLALGLNQSNFIEKWPVVPGDSITVSPRVPDSNLGPVLG</sequence>
<reference key="1">
    <citation type="journal article" date="2007" name="Proc. Natl. Acad. Sci. U.S.A.">
        <title>Genome sequencing reveals complex secondary metabolome in the marine actinomycete Salinispora tropica.</title>
        <authorList>
            <person name="Udwary D.W."/>
            <person name="Zeigler L."/>
            <person name="Asolkar R.N."/>
            <person name="Singan V."/>
            <person name="Lapidus A."/>
            <person name="Fenical W."/>
            <person name="Jensen P.R."/>
            <person name="Moore B.S."/>
        </authorList>
    </citation>
    <scope>NUCLEOTIDE SEQUENCE [LARGE SCALE GENOMIC DNA]</scope>
    <source>
        <strain>ATCC BAA-916 / DSM 44818 / JCM 13857 / NBRC 105044 / CNB-440</strain>
    </source>
</reference>
<reference key="2">
    <citation type="journal article" date="2008" name="Nat. Chem. Biol.">
        <title>Discovery and characterization of a marine bacterial SAM-dependent chlorinase.</title>
        <authorList>
            <person name="Eustaquio A.S."/>
            <person name="Pojer F."/>
            <person name="Noel J.P."/>
            <person name="Moore B.S."/>
        </authorList>
    </citation>
    <scope>X-RAY CRYSTALLOGRAPHY (1.55 ANGSTROMS) OF MUTANTS THR-70 AND SER-131 IN COMPLEX WITH SUBSTRATE ANALOGS</scope>
    <scope>FUNCTION</scope>
    <scope>CATALYTIC ACTIVITY</scope>
    <scope>MUTAGENESIS OF TYR-70; TRP-129 AND GLY-131</scope>
    <scope>DISRUPTION PHENOTYPE</scope>
    <scope>BIOPHYSICOCHEMICAL PROPERTIES</scope>
    <scope>SUBSTRATE SPECIFICITY</scope>
    <scope>SUBUNIT</scope>
</reference>
<evidence type="ECO:0000269" key="1">
    <source>
    </source>
</evidence>
<evidence type="ECO:0000303" key="2">
    <source>
    </source>
</evidence>
<evidence type="ECO:0000305" key="3"/>
<evidence type="ECO:0007829" key="4">
    <source>
        <dbReference type="PDB" id="6RYZ"/>
    </source>
</evidence>
<comment type="function">
    <text evidence="1">Involved in the biosynthesis of the proteosome inhibitor salinosporamide A (SalA). Catalyzes the halogenation of S-adenosyl-L-methionine (SAM) with chloride to generate 5'-chloro-5'-deoxyadenosine (5'-CIDA) and L-methionine. It can also use bromide and iodide, producing halogenated 5'-deoxyadenosine (5'-XDA) and L-methionine, however no halogenase activity is detected in the presence of fluoride.</text>
</comment>
<comment type="catalytic activity">
    <reaction evidence="1">
        <text>chloride + S-adenosyl-L-methionine = 5'-chloro-5'-deoxyadenosine + L-methionine</text>
        <dbReference type="Rhea" id="RHEA:28110"/>
        <dbReference type="ChEBI" id="CHEBI:17996"/>
        <dbReference type="ChEBI" id="CHEBI:47133"/>
        <dbReference type="ChEBI" id="CHEBI:57844"/>
        <dbReference type="ChEBI" id="CHEBI:59789"/>
        <dbReference type="EC" id="2.5.1.94"/>
    </reaction>
</comment>
<comment type="biophysicochemical properties">
    <kinetics>
        <KM evidence="1">1 uM for SAM (at pH 7.9 and 37 degrees Celsius)</KM>
        <KM evidence="1">45 mM for chloride (at pH 7.9 and 37 degrees Celsius)</KM>
        <KM evidence="1">150 mM for bromide (at pH 7.9 and 37 degrees Celsius)</KM>
        <KM evidence="1">260 mM for iodide (at pH 7.9 and 37 degrees Celsius)</KM>
    </kinetics>
</comment>
<comment type="subunit">
    <text evidence="1">Homotrimer.</text>
</comment>
<comment type="disruption phenotype">
    <text evidence="1">Cells lacking this gene are not able to produce salinosporamide A (SalA), however they produce salinosporamide B.</text>
</comment>
<comment type="similarity">
    <text evidence="3">Belongs to the SAM hydrolase / SAM-dependent halogenase family.</text>
</comment>
<proteinExistence type="evidence at protein level"/>
<name>SALL_SALTO</name>